<dbReference type="EMBL" id="GU292875">
    <property type="protein sequence ID" value="ADB56691.1"/>
    <property type="molecule type" value="mRNA"/>
</dbReference>
<dbReference type="SMR" id="D2Y1Z8"/>
<dbReference type="ArachnoServer" id="AS000339">
    <property type="toxin name" value="mu-theraphotoxin-Hhn2a"/>
</dbReference>
<dbReference type="GO" id="GO:0005576">
    <property type="term" value="C:extracellular region"/>
    <property type="evidence" value="ECO:0007669"/>
    <property type="project" value="UniProtKB-SubCell"/>
</dbReference>
<dbReference type="GO" id="GO:0044231">
    <property type="term" value="C:host cell presynaptic membrane"/>
    <property type="evidence" value="ECO:0007669"/>
    <property type="project" value="UniProtKB-KW"/>
</dbReference>
<dbReference type="GO" id="GO:0008200">
    <property type="term" value="F:ion channel inhibitor activity"/>
    <property type="evidence" value="ECO:0007669"/>
    <property type="project" value="InterPro"/>
</dbReference>
<dbReference type="GO" id="GO:0017080">
    <property type="term" value="F:sodium channel regulator activity"/>
    <property type="evidence" value="ECO:0007669"/>
    <property type="project" value="UniProtKB-KW"/>
</dbReference>
<dbReference type="GO" id="GO:0090729">
    <property type="term" value="F:toxin activity"/>
    <property type="evidence" value="ECO:0007669"/>
    <property type="project" value="UniProtKB-KW"/>
</dbReference>
<dbReference type="InterPro" id="IPR011696">
    <property type="entry name" value="Huwentoxin-1"/>
</dbReference>
<dbReference type="InterPro" id="IPR013140">
    <property type="entry name" value="Huwentoxin_CS1"/>
</dbReference>
<dbReference type="Pfam" id="PF07740">
    <property type="entry name" value="Toxin_12"/>
    <property type="match status" value="1"/>
</dbReference>
<dbReference type="SUPFAM" id="SSF57059">
    <property type="entry name" value="omega toxin-like"/>
    <property type="match status" value="1"/>
</dbReference>
<dbReference type="PROSITE" id="PS60021">
    <property type="entry name" value="HWTX_1"/>
    <property type="match status" value="1"/>
</dbReference>
<organism>
    <name type="scientific">Cyriopagopus hainanus</name>
    <name type="common">Chinese bird spider</name>
    <name type="synonym">Haplopelma hainanum</name>
    <dbReference type="NCBI Taxonomy" id="209901"/>
    <lineage>
        <taxon>Eukaryota</taxon>
        <taxon>Metazoa</taxon>
        <taxon>Ecdysozoa</taxon>
        <taxon>Arthropoda</taxon>
        <taxon>Chelicerata</taxon>
        <taxon>Arachnida</taxon>
        <taxon>Araneae</taxon>
        <taxon>Mygalomorphae</taxon>
        <taxon>Theraphosidae</taxon>
        <taxon>Haplopelma</taxon>
    </lineage>
</organism>
<proteinExistence type="evidence at protein level"/>
<keyword id="KW-0027">Amidation</keyword>
<keyword id="KW-0903">Direct protein sequencing</keyword>
<keyword id="KW-1015">Disulfide bond</keyword>
<keyword id="KW-0872">Ion channel impairing toxin</keyword>
<keyword id="KW-0960">Knottin</keyword>
<keyword id="KW-0528">Neurotoxin</keyword>
<keyword id="KW-0638">Presynaptic neurotoxin</keyword>
<keyword id="KW-0964">Secreted</keyword>
<keyword id="KW-0732">Signal</keyword>
<keyword id="KW-0800">Toxin</keyword>
<keyword id="KW-0738">Voltage-gated sodium channel impairing toxin</keyword>
<accession>D2Y1Z8</accession>
<accession>P83464</accession>
<comment type="function">
    <text evidence="4">Selective antagonist of neuronal tetrodotoxin (TTX)-sensitive voltage-gated sodium channels (IC(50)=1270 nM on Nav1.1/SCN1A, 270 nM on Nav1.2/SCN2A, 491 nM on Nav1.3/SCN3A and 232 nM on Nav1.7/SCN9A). This toxin suppress Nav1.7 current amplitude without significantly altering the activation, inactivation, and repriming kinetics. Short extreme depolarizations partially activate the toxin-bound channel, indicating voltage-dependent inhibition of this toxin. This toxin increases the deactivation of the Nav1.7 current after extreme depolarizations. The toxin-Nav1.7 complex is gradually dissociated upon prolonged strong depolarizations in a voltage-dependent manner, and the unbound toxin rebinds to Nav1.7 after a long repolarization. Moreover, analysis of chimeric channels showed that the DIIS3-S4 linker is critical for toxin binding to Nav1.7. These data are consistent with this toxin interacting with Nav1.7 site 4 and trapping the domain II voltage sensor in the closed state.</text>
</comment>
<comment type="subunit">
    <text evidence="5">Monomer.</text>
</comment>
<comment type="subcellular location">
    <subcellularLocation>
        <location evidence="2 4">Secreted</location>
    </subcellularLocation>
</comment>
<comment type="tissue specificity">
    <text evidence="10 11">Expressed by the venom gland.</text>
</comment>
<comment type="domain">
    <text evidence="4">The presence of a 'disulfide through disulfide knot' structurally defines this protein as a knottin.</text>
</comment>
<comment type="mass spectrometry"/>
<comment type="miscellaneous">
    <text evidence="2 4">Negative results: has no activity on Nav1.4, Nav1.5, Nav1.8 and Nav1.9 sodium and calcium currents.</text>
</comment>
<comment type="similarity">
    <text evidence="9">Belongs to the neurotoxin 10 (Hwtx-1) family. 15 (Hntx-3) subfamily.</text>
</comment>
<comment type="caution">
    <text evidence="9">Several genes are coding for this toxin for which the structure by NMR has been determined. The cross-references to PDB and additional information can be found in entry AC D2Y1X9.</text>
</comment>
<reference key="1">
    <citation type="journal article" date="2010" name="J. Proteome Res.">
        <title>Molecular diversification of peptide toxins from the tarantula Haplopelma hainanum (Ornithoctonus hainana) venom based on transcriptomic, peptidomic, and genomic analyses.</title>
        <authorList>
            <person name="Tang X."/>
            <person name="Zhang Y."/>
            <person name="Hu W."/>
            <person name="Xu D."/>
            <person name="Tao H."/>
            <person name="Yang X."/>
            <person name="Li Y."/>
            <person name="Jiang L."/>
            <person name="Liang S."/>
        </authorList>
    </citation>
    <scope>NUCLEOTIDE SEQUENCE [LARGE SCALE MRNA]</scope>
    <scope>PROTEIN SEQUENCE OF 49-81</scope>
    <scope>IDENTIFICATION BY MASS SPECTROMETRY</scope>
    <source>
        <tissue>Venom</tissue>
        <tissue>Venom gland</tissue>
    </source>
</reference>
<reference key="2">
    <citation type="journal article" date="2003" name="Eur. J. Pharmacol.">
        <title>Inhibition of neuronal tetrodotoxin-sensitive Na+ channels by two spider toxins: hainantoxin-III and hainantoxin-IV.</title>
        <authorList>
            <person name="Xiao Y."/>
            <person name="Liang S."/>
        </authorList>
    </citation>
    <scope>PROTEIN SEQUENCE OF 49-81</scope>
    <scope>FUNCTION</scope>
    <scope>SUBCELLULAR LOCATION</scope>
    <scope>AMIDATION AT LEU-81</scope>
    <source>
        <tissue>Venom</tissue>
    </source>
</reference>
<reference key="3">
    <citation type="submission" date="2002-10" db="UniProtKB">
        <title>Function and solution structure of hainantoxin-III, a potent neuronal TTX-sensitive sodium channel antagonist from Chinese bird spider Selenocosmia hainana.</title>
        <authorList>
            <person name="Zhu Q."/>
            <person name="Liu Z.-H."/>
            <person name="Liang S.-P."/>
        </authorList>
    </citation>
    <scope>SUBUNIT</scope>
    <scope>MASS SPECTROMETRY</scope>
</reference>
<reference key="4">
    <citation type="journal article" date="2013" name="J. Biol. Chem.">
        <title>Structure and function of hainantoxin-III, a selective antagonist of neuronal tetrodotoxin-sensitive voltage-gated sodium channels isolated from the Chinese bird spider Ornithoctonus hainana.</title>
        <authorList>
            <person name="Liu Z."/>
            <person name="Cai T."/>
            <person name="Zhu Q."/>
            <person name="Deng M."/>
            <person name="Li J."/>
            <person name="Zhou X."/>
            <person name="Zhang F."/>
            <person name="Li D."/>
            <person name="Li J."/>
            <person name="Liu Y."/>
            <person name="Hu W."/>
            <person name="Liang S."/>
        </authorList>
    </citation>
    <scope>FUNCTION</scope>
    <scope>SUBCELLULAR LOCATION</scope>
    <scope>STRUCTURE BY NMR OF 49-81</scope>
    <scope>DISULFIDE BONDS</scope>
    <source>
        <tissue>Venom</tissue>
    </source>
</reference>
<reference key="5">
    <citation type="submission" date="2007-07" db="PDB data bank">
        <title>Three dimensional solution structure of hainantoxin-III by 2D 1H-NMR.</title>
        <authorList>
            <person name="Zhu Q."/>
            <person name="Liu Z."/>
            <person name="Liang S."/>
        </authorList>
    </citation>
    <scope>STRUCTURE BY NMR OF 49-81</scope>
    <scope>DISULFIDE BONDS</scope>
</reference>
<evidence type="ECO:0000255" key="1"/>
<evidence type="ECO:0000269" key="2">
    <source>
    </source>
</evidence>
<evidence type="ECO:0000269" key="3">
    <source>
    </source>
</evidence>
<evidence type="ECO:0000269" key="4">
    <source>
    </source>
</evidence>
<evidence type="ECO:0000269" key="5">
    <source ref="3"/>
</evidence>
<evidence type="ECO:0000269" key="6">
    <source ref="5"/>
</evidence>
<evidence type="ECO:0000303" key="7">
    <source>
    </source>
</evidence>
<evidence type="ECO:0000303" key="8">
    <source ref="5"/>
</evidence>
<evidence type="ECO:0000305" key="9"/>
<evidence type="ECO:0000305" key="10">
    <source>
    </source>
</evidence>
<evidence type="ECO:0000305" key="11">
    <source>
    </source>
</evidence>
<feature type="signal peptide" evidence="1">
    <location>
        <begin position="1"/>
        <end position="21"/>
    </location>
</feature>
<feature type="propeptide" id="PRO_0000400518" evidence="2 3">
    <location>
        <begin position="22"/>
        <end position="48"/>
    </location>
</feature>
<feature type="peptide" id="PRO_0000400519" description="Hainantoxin-III 8" evidence="2 3">
    <location>
        <begin position="49"/>
        <end position="81"/>
    </location>
</feature>
<feature type="modified residue" description="Leucine amide" evidence="2">
    <location>
        <position position="81"/>
    </location>
</feature>
<feature type="disulfide bond" evidence="4 6">
    <location>
        <begin position="50"/>
        <end position="65"/>
    </location>
</feature>
<feature type="disulfide bond" evidence="4 6">
    <location>
        <begin position="57"/>
        <end position="70"/>
    </location>
</feature>
<feature type="disulfide bond" evidence="4 6">
    <location>
        <begin position="64"/>
        <end position="77"/>
    </location>
</feature>
<protein>
    <recommendedName>
        <fullName evidence="7 8">Hainantoxin-III 8</fullName>
        <shortName evidence="7 8">HnTx-III</shortName>
    </recommendedName>
    <alternativeName>
        <fullName>Hainantoxin-3.8</fullName>
    </alternativeName>
    <alternativeName>
        <fullName>Mu-theraphotoxin-Hhn2a</fullName>
        <shortName>Mu-TRTX-Hhn2a</shortName>
    </alternativeName>
    <alternativeName>
        <fullName>Peptide F7-18.76</fullName>
    </alternativeName>
</protein>
<name>H3A08_CYRHA</name>
<sequence>MKASMFLALAGLVLLFVVGYASESEEKEFPRELLSKIFAVDDFTGEERGCKGFGDSCTPGKNECCPNYACSSKHKWCKVYLGK</sequence>